<organism>
    <name type="scientific">Dugesia japonica</name>
    <name type="common">Planarian</name>
    <dbReference type="NCBI Taxonomy" id="6161"/>
    <lineage>
        <taxon>Eukaryota</taxon>
        <taxon>Metazoa</taxon>
        <taxon>Spiralia</taxon>
        <taxon>Lophotrochozoa</taxon>
        <taxon>Platyhelminthes</taxon>
        <taxon>Rhabditophora</taxon>
        <taxon>Seriata</taxon>
        <taxon>Tricladida</taxon>
        <taxon>Continenticola</taxon>
        <taxon>Geoplanoidea</taxon>
        <taxon>Dugesiidae</taxon>
        <taxon>Dugesia</taxon>
    </lineage>
</organism>
<gene>
    <name type="primary">POU1</name>
</gene>
<keyword id="KW-0238">DNA-binding</keyword>
<keyword id="KW-0371">Homeobox</keyword>
<keyword id="KW-0539">Nucleus</keyword>
<dbReference type="EMBL" id="D12924">
    <property type="protein sequence ID" value="BAA02308.1"/>
    <property type="molecule type" value="mRNA"/>
</dbReference>
<dbReference type="PIR" id="JQ2010">
    <property type="entry name" value="JQ2010"/>
</dbReference>
<dbReference type="SMR" id="P31370"/>
<dbReference type="GO" id="GO:0005634">
    <property type="term" value="C:nucleus"/>
    <property type="evidence" value="ECO:0007669"/>
    <property type="project" value="UniProtKB-SubCell"/>
</dbReference>
<dbReference type="GO" id="GO:0000981">
    <property type="term" value="F:DNA-binding transcription factor activity, RNA polymerase II-specific"/>
    <property type="evidence" value="ECO:0007669"/>
    <property type="project" value="InterPro"/>
</dbReference>
<dbReference type="GO" id="GO:0000978">
    <property type="term" value="F:RNA polymerase II cis-regulatory region sequence-specific DNA binding"/>
    <property type="evidence" value="ECO:0007669"/>
    <property type="project" value="TreeGrafter"/>
</dbReference>
<dbReference type="CDD" id="cd00086">
    <property type="entry name" value="homeodomain"/>
    <property type="match status" value="1"/>
</dbReference>
<dbReference type="FunFam" id="1.10.260.40:FF:000001">
    <property type="entry name" value="POU domain protein"/>
    <property type="match status" value="1"/>
</dbReference>
<dbReference type="Gene3D" id="1.10.10.60">
    <property type="entry name" value="Homeodomain-like"/>
    <property type="match status" value="1"/>
</dbReference>
<dbReference type="Gene3D" id="1.10.260.40">
    <property type="entry name" value="lambda repressor-like DNA-binding domains"/>
    <property type="match status" value="1"/>
</dbReference>
<dbReference type="InterPro" id="IPR001356">
    <property type="entry name" value="HD"/>
</dbReference>
<dbReference type="InterPro" id="IPR017970">
    <property type="entry name" value="Homeobox_CS"/>
</dbReference>
<dbReference type="InterPro" id="IPR009057">
    <property type="entry name" value="Homeodomain-like_sf"/>
</dbReference>
<dbReference type="InterPro" id="IPR010982">
    <property type="entry name" value="Lambda_DNA-bd_dom_sf"/>
</dbReference>
<dbReference type="InterPro" id="IPR013847">
    <property type="entry name" value="POU"/>
</dbReference>
<dbReference type="InterPro" id="IPR000327">
    <property type="entry name" value="POU_dom"/>
</dbReference>
<dbReference type="InterPro" id="IPR050255">
    <property type="entry name" value="POU_domain_TF"/>
</dbReference>
<dbReference type="PANTHER" id="PTHR11636">
    <property type="entry name" value="POU DOMAIN"/>
    <property type="match status" value="1"/>
</dbReference>
<dbReference type="PANTHER" id="PTHR11636:SF89">
    <property type="entry name" value="POU DOMAIN PROTEIN 2, ISOFORM B-RELATED"/>
    <property type="match status" value="1"/>
</dbReference>
<dbReference type="Pfam" id="PF00046">
    <property type="entry name" value="Homeodomain"/>
    <property type="match status" value="1"/>
</dbReference>
<dbReference type="Pfam" id="PF00157">
    <property type="entry name" value="Pou"/>
    <property type="match status" value="1"/>
</dbReference>
<dbReference type="PRINTS" id="PR00028">
    <property type="entry name" value="POUDOMAIN"/>
</dbReference>
<dbReference type="SMART" id="SM00389">
    <property type="entry name" value="HOX"/>
    <property type="match status" value="1"/>
</dbReference>
<dbReference type="SMART" id="SM00352">
    <property type="entry name" value="POU"/>
    <property type="match status" value="1"/>
</dbReference>
<dbReference type="SUPFAM" id="SSF46689">
    <property type="entry name" value="Homeodomain-like"/>
    <property type="match status" value="1"/>
</dbReference>
<dbReference type="SUPFAM" id="SSF47413">
    <property type="entry name" value="lambda repressor-like DNA-binding domains"/>
    <property type="match status" value="1"/>
</dbReference>
<dbReference type="PROSITE" id="PS00027">
    <property type="entry name" value="HOMEOBOX_1"/>
    <property type="match status" value="1"/>
</dbReference>
<dbReference type="PROSITE" id="PS50071">
    <property type="entry name" value="HOMEOBOX_2"/>
    <property type="match status" value="1"/>
</dbReference>
<dbReference type="PROSITE" id="PS00035">
    <property type="entry name" value="POU_1"/>
    <property type="match status" value="1"/>
</dbReference>
<dbReference type="PROSITE" id="PS00465">
    <property type="entry name" value="POU_2"/>
    <property type="match status" value="1"/>
</dbReference>
<dbReference type="PROSITE" id="PS51179">
    <property type="entry name" value="POU_3"/>
    <property type="match status" value="1"/>
</dbReference>
<proteinExistence type="evidence at transcript level"/>
<reference key="1">
    <citation type="journal article" date="1993" name="Biochem. Biophys. Res. Commun.">
        <title>POU-domain genes in planarian Dugesia japonica: the structure and expression.</title>
        <authorList>
            <person name="Orii H."/>
            <person name="Agata K."/>
            <person name="Watanabe K."/>
        </authorList>
    </citation>
    <scope>NUCLEOTIDE SEQUENCE [MRNA]</scope>
</reference>
<sequence>MTQVSHIGSSHFNINSSIKTALPLINSQYNSLVNESTISSNINLPFRLDAPSLFNGLPEEWGPTDAELSTHSNVNYPGLTEATIDYKFCSTLNSYFDTNQRFGNVPNDTYLMANSMAANIENNSWHNSRYYFDGNHPLSQWLPVPVNCWSNNNYIRDDFYDKSIQEEEFKSRSVLQTNEKNSTNVSSDINHYKPLITDENENLKMTKPTHNLLNNDSINLCRFPQNEIIMPDLINAPSPTLTNNNLFYSCGDHRSGKTEDLPSSDDLEQFAKMFKQRRIKLGYTQADVGLALGTLYGNVFSQTTICRFEALQLSFKNMCKLRPLLQKWLHEADSSSESPTNFDKISAQSRKRKKRTSIEANVKSILESSFMKLSKPSAQDISSLAEKLSLEKEVVRVWFCNRRQKEKRITPSFDVNEQFDNEVSSTMPYSTLNDDRNEKTIKNSFENHEKLIKQTGETNHEQNNNSSVKRLKIRKEPDQISINDENTSCRAESSGIVPDTHYRQECDNHSICGYNIHDIHESSVLMSDPVSFYPRSFFMKNNIYSNGTTPTLFDHSQMI</sequence>
<comment type="subcellular location">
    <subcellularLocation>
        <location evidence="3">Nucleus</location>
    </subcellularLocation>
</comment>
<comment type="similarity">
    <text evidence="3">Belongs to the POU transcription factor family.</text>
</comment>
<name>POU1_DUGJA</name>
<evidence type="ECO:0000255" key="1">
    <source>
        <dbReference type="PROSITE-ProRule" id="PRU00108"/>
    </source>
</evidence>
<evidence type="ECO:0000255" key="2">
    <source>
        <dbReference type="PROSITE-ProRule" id="PRU00530"/>
    </source>
</evidence>
<evidence type="ECO:0000305" key="3"/>
<feature type="chain" id="PRO_0000100783" description="POU domain protein 1">
    <location>
        <begin position="1"/>
        <end position="559"/>
    </location>
</feature>
<feature type="domain" description="POU-specific" evidence="2">
    <location>
        <begin position="259"/>
        <end position="333"/>
    </location>
</feature>
<feature type="DNA-binding region" description="Homeobox" evidence="1">
    <location>
        <begin position="351"/>
        <end position="410"/>
    </location>
</feature>
<accession>P31370</accession>
<protein>
    <recommendedName>
        <fullName>POU domain protein 1</fullName>
        <shortName>DjPOU1</shortName>
    </recommendedName>
</protein>